<comment type="function">
    <text evidence="3 6 7 9 10 11">Essential for plant growth, promotes cell division in root meristems (PubMed:21666002, PubMed:21883234, PubMed:26276842). Catalyzes the biosynthesis of ceramide sphingolipids with C(16) to C(28) fatty acids, structural membrane lipids involved in membrane trafficking (e.g. early endosomes) and cell polarity (e.g. polar auxin transport related proteins); mostly active with t18:0 and saturated very long saturated fatty acids (C24:0 and C26:0), such as long-chain base (LCB) phytosphingosine (t18:0), lignoceroyl- and hexacosanoyl-CoAs (PubMed:21666002, PubMed:21883234, PubMed:26276842, PubMed:26635357). Mediates resistance to sphinganine-analog mycotoxins (SAMs, e.g. fumonisin B(1)) by restoring the sphingolipid biosynthesis (By similarity). Could salvage the transport of GPI-anchored proteins from the endoplasmic reticulum to the Golgi apparatus in ceramides-depleted cells after SAM exposure (By similarity). May prevent precocious cell death by delaying PR1 accumulation during aging (PubMed:21883234). Contributes to hypoxic conditions tolerance (e.g. submergences), especially in the dark, by promoting the formation of very-long-chain (VLC) ceramide species (22:1, 24:1 and 26:1) and of VLC unsaturated ceramides, which are modulating CTR1-mediated ethylene signaling leading to endoplasmic reticulum (ER)-to-nucleus translocation of EIN2 and EIN3 (PubMed:25822663).</text>
</comment>
<comment type="catalytic activity">
    <reaction evidence="6 7 11">
        <text>(4R)-hydroxysphinganine + a fatty acyl-CoA = an N-acyl-(4R)-4-hydroxysphinganine + CoA + H(+)</text>
        <dbReference type="Rhea" id="RHEA:35651"/>
        <dbReference type="ChEBI" id="CHEBI:15378"/>
        <dbReference type="ChEBI" id="CHEBI:31998"/>
        <dbReference type="ChEBI" id="CHEBI:57287"/>
        <dbReference type="ChEBI" id="CHEBI:64124"/>
        <dbReference type="ChEBI" id="CHEBI:77636"/>
    </reaction>
    <physiologicalReaction direction="left-to-right" evidence="6 7 11">
        <dbReference type="Rhea" id="RHEA:35652"/>
    </physiologicalReaction>
</comment>
<comment type="catalytic activity">
    <reaction evidence="6 7 11">
        <text>hexacosanoyl-CoA + (4R)-hydroxysphinganine = N-hexacosanoyl-(4R)-hydroxysphinganine + CoA + H(+)</text>
        <dbReference type="Rhea" id="RHEA:33339"/>
        <dbReference type="ChEBI" id="CHEBI:15378"/>
        <dbReference type="ChEBI" id="CHEBI:52980"/>
        <dbReference type="ChEBI" id="CHEBI:57287"/>
        <dbReference type="ChEBI" id="CHEBI:64124"/>
        <dbReference type="ChEBI" id="CHEBI:64868"/>
    </reaction>
    <physiologicalReaction direction="left-to-right" evidence="6 7 11">
        <dbReference type="Rhea" id="RHEA:33340"/>
    </physiologicalReaction>
</comment>
<comment type="catalytic activity">
    <reaction evidence="6 7 11">
        <text>tetracosanoyl-CoA + (4R)-hydroxysphinganine = N-tetracosanoyl-(4R)-hydroxysphinganine + CoA + H(+)</text>
        <dbReference type="Rhea" id="RHEA:33595"/>
        <dbReference type="ChEBI" id="CHEBI:15378"/>
        <dbReference type="ChEBI" id="CHEBI:52979"/>
        <dbReference type="ChEBI" id="CHEBI:57287"/>
        <dbReference type="ChEBI" id="CHEBI:64124"/>
        <dbReference type="ChEBI" id="CHEBI:65052"/>
    </reaction>
    <physiologicalReaction direction="left-to-right" evidence="6 7 11">
        <dbReference type="Rhea" id="RHEA:33596"/>
    </physiologicalReaction>
</comment>
<comment type="activity regulation">
    <text evidence="10 11">Inhibited by the mycotoxin fumonisin B(1), a sphingosine analog mycotoxins produced by pathogenic fungi (PubMed:26276842, PubMed:26635357). Repressed by divalent cation such as magnesium Mg(2+), copper Cu(2+), zinc Zn(2+), manganese Mn(2+), calcium Ca(2+) and cobalt Co(2+) (PubMed:26635357).</text>
</comment>
<comment type="biophysicochemical properties">
    <kinetics>
        <KM evidence="11">6.9 uM for phytosphingosine (t18:0)</KM>
        <Vmax evidence="11">273.0 pmol/min/mg enzyme with phytosphingosine (t18:0) as substrate</Vmax>
    </kinetics>
</comment>
<comment type="pathway">
    <text evidence="6 7 11">Sphingolipid metabolism.</text>
</comment>
<comment type="subcellular location">
    <subcellularLocation>
        <location evidence="1">Endoplasmic reticulum membrane</location>
        <topology evidence="4">Multi-pass membrane protein</topology>
    </subcellularLocation>
</comment>
<comment type="tissue specificity">
    <text evidence="7 8">Expressed ubiquitously at high levels (PubMed:21883234). Not observed in pollen (PubMed:25794895).</text>
</comment>
<comment type="disruption phenotype">
    <text evidence="6 7 9">Elevated levels of free trihydroxy sphingoid bases as well as ceramide and glucosylceramide species with C(16) fatty acid, but reduced levels of species with C(20) to C(28) fatty acids (PubMed:21883234, PubMed:25822663). Spontaneous cell death accompanied by an enhanced PR1 expression at advanced age (PubMed:21883234). The double mutant loh1 loh3 is embryonically lethal (PubMed:21666002, PubMed:21883234). Rare viable loh1 loh3 seedlings have a complete absence of very-long-chain fatty acid (VLCFA) in sphingolipids and exhibit strong dwarf phenotype and altered lateral root outgrowth associated with disrupted early endosomes and an impaired polar auxin transport due to abnormal localization of auxin transporters in the plasma membrane; these phenotypes are in part restored by external auxin (NAA) (PubMed:21666002). Better resistance to submergence under light conditions, but increased sensitivity to dark submergence associated with declined levels of unsaturated very-long-chain (VLC) ceramide species (22:1, 24:1 and 26:1) (PubMed:25822663). The double mutant loh1 loh3, lacking (VLC), have an impaired tolerance to both dark and light submergences (PubMed:25822663).</text>
</comment>
<evidence type="ECO:0000250" key="1">
    <source>
        <dbReference type="UniProtKB" id="Q8C172"/>
    </source>
</evidence>
<evidence type="ECO:0000250" key="2">
    <source>
        <dbReference type="UniProtKB" id="Q9LJK3"/>
    </source>
</evidence>
<evidence type="ECO:0000250" key="3">
    <source>
        <dbReference type="UniProtKB" id="Q9M6A3"/>
    </source>
</evidence>
<evidence type="ECO:0000255" key="4"/>
<evidence type="ECO:0000255" key="5">
    <source>
        <dbReference type="PROSITE-ProRule" id="PRU00205"/>
    </source>
</evidence>
<evidence type="ECO:0000269" key="6">
    <source>
    </source>
</evidence>
<evidence type="ECO:0000269" key="7">
    <source>
    </source>
</evidence>
<evidence type="ECO:0000269" key="8">
    <source>
    </source>
</evidence>
<evidence type="ECO:0000269" key="9">
    <source>
    </source>
</evidence>
<evidence type="ECO:0000269" key="10">
    <source>
    </source>
</evidence>
<evidence type="ECO:0000269" key="11">
    <source>
    </source>
</evidence>
<evidence type="ECO:0000303" key="12">
    <source>
    </source>
</evidence>
<evidence type="ECO:0000303" key="13">
    <source>
    </source>
</evidence>
<evidence type="ECO:0000303" key="14">
    <source>
    </source>
</evidence>
<evidence type="ECO:0000303" key="15">
    <source>
    </source>
</evidence>
<evidence type="ECO:0000303" key="16">
    <source>
    </source>
</evidence>
<evidence type="ECO:0000303" key="17">
    <source>
    </source>
</evidence>
<evidence type="ECO:0000312" key="18">
    <source>
        <dbReference type="Araport" id="AT3G25540"/>
    </source>
</evidence>
<evidence type="ECO:0000312" key="19">
    <source>
        <dbReference type="EMBL" id="BAB01323.1"/>
    </source>
</evidence>
<sequence>MGLFESVKSIDWEQESFPTYQDLGFLPLFAVFFPTIRFLLDRFVFEKLASLVIYGRMSTNKSDNIKDRKKNSPKVRKFKESAWKCIYYLSAELLALSVTYNEPWFSNTLYFWIGPGDQIWPDQPMKMKLKFLYMFAAGFYTYSIFALVFWETRRSDFGVSMGHHITTLVLIVLSYICRLTRAGSVILALHDASDVFLEIGKMSKYCGAESLASISFVLFALSWVVLRLIYYPFWILWSTSYQIIMTVDKEKHPNGPILYYMFNTLLYFLLVLHIFWWVLIYRMLVKQVQDRGKLSEDVRSDSESDDEHED</sequence>
<proteinExistence type="evidence at protein level"/>
<feature type="chain" id="PRO_0000185518" description="Ceramide synthase LOH1">
    <location>
        <begin position="1"/>
        <end position="310"/>
    </location>
</feature>
<feature type="transmembrane region" description="Helical" evidence="4">
    <location>
        <begin position="16"/>
        <end position="36"/>
    </location>
</feature>
<feature type="transmembrane region" description="Helical" evidence="4">
    <location>
        <begin position="85"/>
        <end position="105"/>
    </location>
</feature>
<feature type="transmembrane region" description="Helical" evidence="4">
    <location>
        <begin position="131"/>
        <end position="151"/>
    </location>
</feature>
<feature type="transmembrane region" description="Helical" evidence="4">
    <location>
        <begin position="157"/>
        <end position="177"/>
    </location>
</feature>
<feature type="transmembrane region" description="Helical" evidence="4">
    <location>
        <begin position="216"/>
        <end position="236"/>
    </location>
</feature>
<feature type="transmembrane region" description="Helical" evidence="4">
    <location>
        <begin position="260"/>
        <end position="280"/>
    </location>
</feature>
<feature type="domain" description="TLC" evidence="5">
    <location>
        <begin position="76"/>
        <end position="289"/>
    </location>
</feature>
<feature type="modified residue" description="Phosphoserine" evidence="2">
    <location>
        <position position="300"/>
    </location>
</feature>
<feature type="modified residue" description="Phosphoserine" evidence="2">
    <location>
        <position position="302"/>
    </location>
</feature>
<accession>Q9LDF2</accession>
<dbReference type="EC" id="2.3.1.-" evidence="6 7 11"/>
<dbReference type="EMBL" id="AF198179">
    <property type="protein sequence ID" value="AAF66102.1"/>
    <property type="molecule type" value="mRNA"/>
</dbReference>
<dbReference type="EMBL" id="AB025639">
    <property type="protein sequence ID" value="BAB01323.1"/>
    <property type="molecule type" value="Genomic_DNA"/>
</dbReference>
<dbReference type="EMBL" id="CP002686">
    <property type="protein sequence ID" value="AEE77023.1"/>
    <property type="molecule type" value="Genomic_DNA"/>
</dbReference>
<dbReference type="EMBL" id="CP002686">
    <property type="protein sequence ID" value="ANM66003.1"/>
    <property type="molecule type" value="Genomic_DNA"/>
</dbReference>
<dbReference type="EMBL" id="AF360152">
    <property type="protein sequence ID" value="AAK25862.1"/>
    <property type="molecule type" value="mRNA"/>
</dbReference>
<dbReference type="EMBL" id="AY142597">
    <property type="protein sequence ID" value="AAN13166.1"/>
    <property type="molecule type" value="mRNA"/>
</dbReference>
<dbReference type="RefSeq" id="NP_001319643.1">
    <property type="nucleotide sequence ID" value="NM_001338755.1"/>
</dbReference>
<dbReference type="RefSeq" id="NP_566769.1">
    <property type="nucleotide sequence ID" value="NM_113450.5"/>
</dbReference>
<dbReference type="SMR" id="Q9LDF2"/>
<dbReference type="FunCoup" id="Q9LDF2">
    <property type="interactions" value="4359"/>
</dbReference>
<dbReference type="STRING" id="3702.Q9LDF2"/>
<dbReference type="iPTMnet" id="Q9LDF2"/>
<dbReference type="PaxDb" id="3702-AT3G25540.1"/>
<dbReference type="ProteomicsDB" id="237069"/>
<dbReference type="EnsemblPlants" id="AT3G25540.1">
    <property type="protein sequence ID" value="AT3G25540.1"/>
    <property type="gene ID" value="AT3G25540"/>
</dbReference>
<dbReference type="EnsemblPlants" id="AT3G25540.3">
    <property type="protein sequence ID" value="AT3G25540.3"/>
    <property type="gene ID" value="AT3G25540"/>
</dbReference>
<dbReference type="GeneID" id="822140"/>
<dbReference type="Gramene" id="AT3G25540.1">
    <property type="protein sequence ID" value="AT3G25540.1"/>
    <property type="gene ID" value="AT3G25540"/>
</dbReference>
<dbReference type="Gramene" id="AT3G25540.3">
    <property type="protein sequence ID" value="AT3G25540.3"/>
    <property type="gene ID" value="AT3G25540"/>
</dbReference>
<dbReference type="KEGG" id="ath:AT3G25540"/>
<dbReference type="Araport" id="AT3G25540"/>
<dbReference type="TAIR" id="AT3G25540">
    <property type="gene designation" value="LOH1"/>
</dbReference>
<dbReference type="eggNOG" id="KOG1607">
    <property type="taxonomic scope" value="Eukaryota"/>
</dbReference>
<dbReference type="HOGENOM" id="CLU_028277_5_0_1"/>
<dbReference type="InParanoid" id="Q9LDF2"/>
<dbReference type="OMA" id="WFINTEY"/>
<dbReference type="PhylomeDB" id="Q9LDF2"/>
<dbReference type="BioCyc" id="MetaCyc:MONOMER-20773"/>
<dbReference type="BRENDA" id="2.3.1.297">
    <property type="organism ID" value="399"/>
</dbReference>
<dbReference type="PRO" id="PR:Q9LDF2"/>
<dbReference type="Proteomes" id="UP000006548">
    <property type="component" value="Chromosome 3"/>
</dbReference>
<dbReference type="ExpressionAtlas" id="Q9LDF2">
    <property type="expression patterns" value="baseline and differential"/>
</dbReference>
<dbReference type="GO" id="GO:0005783">
    <property type="term" value="C:endoplasmic reticulum"/>
    <property type="evidence" value="ECO:0000314"/>
    <property type="project" value="TAIR"/>
</dbReference>
<dbReference type="GO" id="GO:0005789">
    <property type="term" value="C:endoplasmic reticulum membrane"/>
    <property type="evidence" value="ECO:0007669"/>
    <property type="project" value="UniProtKB-SubCell"/>
</dbReference>
<dbReference type="GO" id="GO:0005794">
    <property type="term" value="C:Golgi apparatus"/>
    <property type="evidence" value="ECO:0000314"/>
    <property type="project" value="TAIR"/>
</dbReference>
<dbReference type="GO" id="GO:0005886">
    <property type="term" value="C:plasma membrane"/>
    <property type="evidence" value="ECO:0007005"/>
    <property type="project" value="TAIR"/>
</dbReference>
<dbReference type="GO" id="GO:0050291">
    <property type="term" value="F:sphingosine N-acyltransferase activity"/>
    <property type="evidence" value="ECO:0000316"/>
    <property type="project" value="TAIR"/>
</dbReference>
<dbReference type="GO" id="GO:0046513">
    <property type="term" value="P:ceramide biosynthetic process"/>
    <property type="evidence" value="ECO:0000314"/>
    <property type="project" value="UniProtKB"/>
</dbReference>
<dbReference type="GO" id="GO:0010256">
    <property type="term" value="P:endomembrane system organization"/>
    <property type="evidence" value="ECO:0000315"/>
    <property type="project" value="UniProtKB"/>
</dbReference>
<dbReference type="GO" id="GO:2000012">
    <property type="term" value="P:regulation of auxin polar transport"/>
    <property type="evidence" value="ECO:0000315"/>
    <property type="project" value="UniProtKB"/>
</dbReference>
<dbReference type="GO" id="GO:0006665">
    <property type="term" value="P:sphingolipid metabolic process"/>
    <property type="evidence" value="ECO:0000314"/>
    <property type="project" value="UniProtKB"/>
</dbReference>
<dbReference type="GO" id="GO:0042761">
    <property type="term" value="P:very long-chain fatty acid biosynthetic process"/>
    <property type="evidence" value="ECO:0000316"/>
    <property type="project" value="TAIR"/>
</dbReference>
<dbReference type="InterPro" id="IPR016439">
    <property type="entry name" value="Lag1/Lac1-like"/>
</dbReference>
<dbReference type="InterPro" id="IPR006634">
    <property type="entry name" value="TLC-dom"/>
</dbReference>
<dbReference type="PANTHER" id="PTHR12560:SF45">
    <property type="entry name" value="CERAMIDE SYNTHASE LOH1"/>
    <property type="match status" value="1"/>
</dbReference>
<dbReference type="PANTHER" id="PTHR12560">
    <property type="entry name" value="LONGEVITY ASSURANCE FACTOR 1 LAG1"/>
    <property type="match status" value="1"/>
</dbReference>
<dbReference type="Pfam" id="PF03798">
    <property type="entry name" value="TRAM_LAG1_CLN8"/>
    <property type="match status" value="1"/>
</dbReference>
<dbReference type="PIRSF" id="PIRSF005225">
    <property type="entry name" value="LAG1_LAC1"/>
    <property type="match status" value="1"/>
</dbReference>
<dbReference type="SMART" id="SM00724">
    <property type="entry name" value="TLC"/>
    <property type="match status" value="1"/>
</dbReference>
<dbReference type="PROSITE" id="PS50922">
    <property type="entry name" value="TLC"/>
    <property type="match status" value="1"/>
</dbReference>
<protein>
    <recommendedName>
        <fullName evidence="16">Ceramide synthase LOH1</fullName>
        <shortName evidence="15">CS1</shortName>
        <shortName evidence="14">CSII</shortName>
        <ecNumber evidence="6 7 11">2.3.1.-</ecNumber>
    </recommendedName>
    <alternativeName>
        <fullName evidence="17">Protein LONGEVITY ASSURANCE GENE ONE HOMOLOG 1</fullName>
        <shortName evidence="13">LAG One Homolog 1</shortName>
        <shortName evidence="12">LAG1 homolog 1</shortName>
        <shortName evidence="12">LAG1 longevity assurance homolog 1</shortName>
    </alternativeName>
</protein>
<keyword id="KW-0256">Endoplasmic reticulum</keyword>
<keyword id="KW-0444">Lipid biosynthesis</keyword>
<keyword id="KW-0443">Lipid metabolism</keyword>
<keyword id="KW-0472">Membrane</keyword>
<keyword id="KW-0597">Phosphoprotein</keyword>
<keyword id="KW-1185">Reference proteome</keyword>
<keyword id="KW-0808">Transferase</keyword>
<keyword id="KW-0812">Transmembrane</keyword>
<keyword id="KW-1133">Transmembrane helix</keyword>
<name>LOH1_ARATH</name>
<gene>
    <name evidence="13 16" type="primary">LOH1</name>
    <name evidence="12" type="synonym">LAG1</name>
    <name evidence="18" type="ordered locus">At3g25540</name>
    <name evidence="19" type="ORF">MWL2.19</name>
</gene>
<organism>
    <name type="scientific">Arabidopsis thaliana</name>
    <name type="common">Mouse-ear cress</name>
    <dbReference type="NCBI Taxonomy" id="3702"/>
    <lineage>
        <taxon>Eukaryota</taxon>
        <taxon>Viridiplantae</taxon>
        <taxon>Streptophyta</taxon>
        <taxon>Embryophyta</taxon>
        <taxon>Tracheophyta</taxon>
        <taxon>Spermatophyta</taxon>
        <taxon>Magnoliopsida</taxon>
        <taxon>eudicotyledons</taxon>
        <taxon>Gunneridae</taxon>
        <taxon>Pentapetalae</taxon>
        <taxon>rosids</taxon>
        <taxon>malvids</taxon>
        <taxon>Brassicales</taxon>
        <taxon>Brassicaceae</taxon>
        <taxon>Camelineae</taxon>
        <taxon>Arabidopsis</taxon>
    </lineage>
</organism>
<reference key="1">
    <citation type="journal article" date="2000" name="Proc. Natl. Acad. Sci. U.S.A.">
        <title>A longevity assurance gene homolog of tomato mediates resistance to Alternaria alternata f. sp. lycopersici toxins and fumonisin B1.</title>
        <authorList>
            <person name="Brandwagt B.F."/>
            <person name="Mesbah L.A."/>
            <person name="Takken F.L.W."/>
            <person name="Laurent P.L."/>
            <person name="Kneppers T.J.A."/>
            <person name="Hille J."/>
            <person name="Nijkamp H.J.J."/>
        </authorList>
    </citation>
    <scope>NUCLEOTIDE SEQUENCE [MRNA]</scope>
    <source>
        <strain>cv. Columbia</strain>
    </source>
</reference>
<reference key="2">
    <citation type="journal article" date="2000" name="DNA Res.">
        <title>Structural analysis of Arabidopsis thaliana chromosome 3. I. Sequence features of the regions of 4,504,864 bp covered by sixty P1 and TAC clones.</title>
        <authorList>
            <person name="Sato S."/>
            <person name="Nakamura Y."/>
            <person name="Kaneko T."/>
            <person name="Katoh T."/>
            <person name="Asamizu E."/>
            <person name="Tabata S."/>
        </authorList>
    </citation>
    <scope>NUCLEOTIDE SEQUENCE [LARGE SCALE GENOMIC DNA]</scope>
    <source>
        <strain>cv. Columbia</strain>
    </source>
</reference>
<reference key="3">
    <citation type="journal article" date="2017" name="Plant J.">
        <title>Araport11: a complete reannotation of the Arabidopsis thaliana reference genome.</title>
        <authorList>
            <person name="Cheng C.Y."/>
            <person name="Krishnakumar V."/>
            <person name="Chan A.P."/>
            <person name="Thibaud-Nissen F."/>
            <person name="Schobel S."/>
            <person name="Town C.D."/>
        </authorList>
    </citation>
    <scope>GENOME REANNOTATION</scope>
    <source>
        <strain>cv. Columbia</strain>
    </source>
</reference>
<reference key="4">
    <citation type="journal article" date="2003" name="Science">
        <title>Empirical analysis of transcriptional activity in the Arabidopsis genome.</title>
        <authorList>
            <person name="Yamada K."/>
            <person name="Lim J."/>
            <person name="Dale J.M."/>
            <person name="Chen H."/>
            <person name="Shinn P."/>
            <person name="Palm C.J."/>
            <person name="Southwick A.M."/>
            <person name="Wu H.C."/>
            <person name="Kim C.J."/>
            <person name="Nguyen M."/>
            <person name="Pham P.K."/>
            <person name="Cheuk R.F."/>
            <person name="Karlin-Newmann G."/>
            <person name="Liu S.X."/>
            <person name="Lam B."/>
            <person name="Sakano H."/>
            <person name="Wu T."/>
            <person name="Yu G."/>
            <person name="Miranda M."/>
            <person name="Quach H.L."/>
            <person name="Tripp M."/>
            <person name="Chang C.H."/>
            <person name="Lee J.M."/>
            <person name="Toriumi M.J."/>
            <person name="Chan M.M."/>
            <person name="Tang C.C."/>
            <person name="Onodera C.S."/>
            <person name="Deng J.M."/>
            <person name="Akiyama K."/>
            <person name="Ansari Y."/>
            <person name="Arakawa T."/>
            <person name="Banh J."/>
            <person name="Banno F."/>
            <person name="Bowser L."/>
            <person name="Brooks S.Y."/>
            <person name="Carninci P."/>
            <person name="Chao Q."/>
            <person name="Choy N."/>
            <person name="Enju A."/>
            <person name="Goldsmith A.D."/>
            <person name="Gurjal M."/>
            <person name="Hansen N.F."/>
            <person name="Hayashizaki Y."/>
            <person name="Johnson-Hopson C."/>
            <person name="Hsuan V.W."/>
            <person name="Iida K."/>
            <person name="Karnes M."/>
            <person name="Khan S."/>
            <person name="Koesema E."/>
            <person name="Ishida J."/>
            <person name="Jiang P.X."/>
            <person name="Jones T."/>
            <person name="Kawai J."/>
            <person name="Kamiya A."/>
            <person name="Meyers C."/>
            <person name="Nakajima M."/>
            <person name="Narusaka M."/>
            <person name="Seki M."/>
            <person name="Sakurai T."/>
            <person name="Satou M."/>
            <person name="Tamse R."/>
            <person name="Vaysberg M."/>
            <person name="Wallender E.K."/>
            <person name="Wong C."/>
            <person name="Yamamura Y."/>
            <person name="Yuan S."/>
            <person name="Shinozaki K."/>
            <person name="Davis R.W."/>
            <person name="Theologis A."/>
            <person name="Ecker J.R."/>
        </authorList>
    </citation>
    <scope>NUCLEOTIDE SEQUENCE [LARGE SCALE MRNA]</scope>
    <source>
        <strain>cv. Columbia</strain>
    </source>
</reference>
<reference key="5">
    <citation type="journal article" date="2011" name="New Phytol.">
        <title>Disruption of the ceramide synthase LOH1 causes spontaneous cell death in Arabidopsis thaliana.</title>
        <authorList>
            <person name="Ternes P."/>
            <person name="Feussner K."/>
            <person name="Werner S."/>
            <person name="Lerche J."/>
            <person name="Iven T."/>
            <person name="Heilmann I."/>
            <person name="Riezman H."/>
            <person name="Feussner I."/>
        </authorList>
    </citation>
    <scope>FUNCTION</scope>
    <scope>DISRUPTION PHENOTYPE</scope>
    <scope>TISSUE SPECIFICITY</scope>
    <scope>CATALYTIC ACTIVITY</scope>
    <scope>PATHWAY</scope>
    <source>
        <strain>cv. Columbia</strain>
    </source>
</reference>
<reference key="6">
    <citation type="journal article" date="2011" name="Plant Cell">
        <title>Sphingolipids containing very-long-chain fatty acids define a secretory pathway for specific polar plasma membrane protein targeting in Arabidopsis.</title>
        <authorList>
            <person name="Markham J.E."/>
            <person name="Molino D."/>
            <person name="Gissot L."/>
            <person name="Bellec Y."/>
            <person name="Hematy K."/>
            <person name="Marion J."/>
            <person name="Belcram K."/>
            <person name="Palauqui J.-C."/>
            <person name="Satiat-Jeunemaitre B."/>
            <person name="Faure J.-D."/>
        </authorList>
    </citation>
    <scope>FUNCTION</scope>
    <scope>DISRUPTION PHENOTYPE</scope>
    <scope>CATALYTIC ACTIVITY</scope>
    <scope>PATHWAY</scope>
    <source>
        <strain>cv. Columbia</strain>
    </source>
</reference>
<reference key="7">
    <citation type="journal article" date="2013" name="Arabidopsis Book">
        <title>Acyl-lipid metabolism.</title>
        <authorList>
            <person name="Li-Beisson Y."/>
            <person name="Shorrosh B."/>
            <person name="Beisson F."/>
            <person name="Andersson M.X."/>
            <person name="Arondel V."/>
            <person name="Bates P.D."/>
            <person name="Baud S."/>
            <person name="Bird D."/>
            <person name="Debono A."/>
            <person name="Durrett T.P."/>
            <person name="Franke R.B."/>
            <person name="Graham I.A."/>
            <person name="Katayama K."/>
            <person name="Kelly A.A."/>
            <person name="Larson T."/>
            <person name="Markham J.E."/>
            <person name="Miquel M."/>
            <person name="Molina I."/>
            <person name="Nishida I."/>
            <person name="Rowland O."/>
            <person name="Samuels L."/>
            <person name="Schmid K.M."/>
            <person name="Wada H."/>
            <person name="Welti R."/>
            <person name="Xu C."/>
            <person name="Zallot R."/>
            <person name="Ohlrogge J."/>
        </authorList>
    </citation>
    <scope>REVIEW ON SPHINGOLIPIDS</scope>
</reference>
<reference key="8">
    <citation type="journal article" date="2013" name="Curr. Opin. Plant Biol.">
        <title>Plant sphingolipids: function follows form.</title>
        <authorList>
            <person name="Markham J.E."/>
            <person name="Lynch D.V."/>
            <person name="Napier J.A."/>
            <person name="Dunn T.M."/>
            <person name="Cahoon E.B."/>
        </authorList>
    </citation>
    <scope>REVIEW ON SPHINGOLIPIDS</scope>
</reference>
<reference key="9">
    <citation type="journal article" date="2015" name="Phytochemistry">
        <title>Sphingolipid metabolism is strikingly different between pollen and leaf in Arabidopsis as revealed by compositional and gene expression profiling.</title>
        <authorList>
            <person name="Luttgeharm K.D."/>
            <person name="Kimberlin A.N."/>
            <person name="Cahoon R.E."/>
            <person name="Cerny R.L."/>
            <person name="Napier J.A."/>
            <person name="Markham J.E."/>
            <person name="Cahoon E.B."/>
        </authorList>
    </citation>
    <scope>TISSUE SPECIFICITY</scope>
    <source>
        <strain>cv. Columbia</strain>
    </source>
</reference>
<reference key="10">
    <citation type="journal article" date="2015" name="Plant Physiol.">
        <title>Overexpression of Arabidopsis ceramide synthases differentially affects growth, sphingolipid metabolism, programmed cell death, and mycotoxin resistance.</title>
        <authorList>
            <person name="Luttgeharm K.D."/>
            <person name="Chen M."/>
            <person name="Mehra A."/>
            <person name="Cahoon R.E."/>
            <person name="Markham J.E."/>
            <person name="Cahoon E.B."/>
        </authorList>
    </citation>
    <scope>FUNCTION</scope>
    <scope>ACTIVITY REGULATION</scope>
    <source>
        <strain>cv. Columbia</strain>
    </source>
</reference>
<reference key="11">
    <citation type="journal article" date="2015" name="PLoS Genet.">
        <title>Unsaturation of very-long-chain ceramides protects plant from hypoxia-induced damages by modulating ethylene signaling in Arabidopsis.</title>
        <authorList>
            <person name="Xie L.-J."/>
            <person name="Chen Q.-F."/>
            <person name="Chen M.-X."/>
            <person name="Yu L.-J."/>
            <person name="Huang L."/>
            <person name="Chen L."/>
            <person name="Wang F.-Z."/>
            <person name="Xia F.-N."/>
            <person name="Zhu T.-R."/>
            <person name="Wu J.-X."/>
            <person name="Yin J."/>
            <person name="Liao B."/>
            <person name="Shi J."/>
            <person name="Zhang J.-H."/>
            <person name="Aharoni A."/>
            <person name="Yao N."/>
            <person name="Shu W."/>
            <person name="Xiao S."/>
        </authorList>
    </citation>
    <scope>FUNCTION</scope>
    <scope>DISRUPTION PHENOTYPE</scope>
    <source>
        <strain>cv. Columbia</strain>
    </source>
</reference>
<reference key="12">
    <citation type="journal article" date="2016" name="Biochem. J.">
        <title>Substrate specificity, kinetic properties and inhibition by fumonisin B1 of ceramide synthase isoforms from Arabidopsis.</title>
        <authorList>
            <person name="Luttgeharm K.D."/>
            <person name="Cahoon E.B."/>
            <person name="Markham J.E."/>
        </authorList>
    </citation>
    <scope>FUNCTION</scope>
    <scope>CATALYTIC ACTIVITY</scope>
    <scope>ACTIVITY REGULATION</scope>
    <scope>BIOPHYSICOCHEMICAL PROPERTIES</scope>
    <scope>PATHWAY</scope>
</reference>
<reference key="13">
    <citation type="journal article" date="2020" name="Trends Plant Sci.">
        <title>Synthesis and function of complex sphingolipid glycosylation.</title>
        <authorList>
            <person name="Mortimer J.C."/>
            <person name="Scheller H.V."/>
        </authorList>
    </citation>
    <scope>REVIEW</scope>
</reference>